<proteinExistence type="inferred from homology"/>
<keyword id="KW-1015">Disulfide bond</keyword>
<keyword id="KW-0325">Glycoprotein</keyword>
<keyword id="KW-0378">Hydrolase</keyword>
<keyword id="KW-0420">Kringle</keyword>
<keyword id="KW-0645">Protease</keyword>
<keyword id="KW-1185">Reference proteome</keyword>
<keyword id="KW-0677">Repeat</keyword>
<keyword id="KW-0964">Secreted</keyword>
<keyword id="KW-0720">Serine protease</keyword>
<keyword id="KW-0732">Signal</keyword>
<accession>Q5G267</accession>
<organism>
    <name type="scientific">Macaca mulatta</name>
    <name type="common">Rhesus macaque</name>
    <dbReference type="NCBI Taxonomy" id="9544"/>
    <lineage>
        <taxon>Eukaryota</taxon>
        <taxon>Metazoa</taxon>
        <taxon>Chordata</taxon>
        <taxon>Craniata</taxon>
        <taxon>Vertebrata</taxon>
        <taxon>Euteleostomi</taxon>
        <taxon>Mammalia</taxon>
        <taxon>Eutheria</taxon>
        <taxon>Euarchontoglires</taxon>
        <taxon>Primates</taxon>
        <taxon>Haplorrhini</taxon>
        <taxon>Catarrhini</taxon>
        <taxon>Cercopithecidae</taxon>
        <taxon>Cercopithecinae</taxon>
        <taxon>Macaca</taxon>
    </lineage>
</organism>
<name>NETR_MACMU</name>
<sequence length="875" mass="97187">MTLARFVLALVLGALPEVVGFDSVLNDSFHHRHRHSPPPGPQYPYYLPTHQRPPRTRPPPPLPRFPRPPRALPAQRPHALQAGHTPRPHPWGCPAGELWVSVTDFGAPCLRWAEVPPFLERSPPANWAQLRGQRHNFCRSPDGTGRPWCFYGDARGKVDWGYCDCRHGSVRLRGGKNEFEGTVEVYASGAWGTVCSSHWDDSDASVICHQLQLGGKGIAKQTPFSGLGLIPIYWSNVRCRGDEENILLCEKDIWQGGVCPQKMAAAVTCSFSRGPAFPIIRLVGGSSVHEGRVELYHAGQWGTICDDQWDDADAEVICRQLGLSGIAKAWHQAYFGEGSGPVMLDEVRCTGNELSIEQCPKSSWGEHNCGHKEDAGVSCTPLTDGVIRLAGGKGSHEGRLEVYYRGQWGTVCDDGWTELNTYVVCRQLGFKYGKQASANHFEESTGPIWLDDVSCSGKETRFLQCSRRQWGQHDCSHHEDVSIACYPGSEGHRLSLGFPVRLMDGENKKEGRVEVFINGQWGTICDDGWTDKDAAVICRQLGYKGPARARTMAYFGEGKGPIHVDNVKCTGNERSLADCIKQDIGRHNCRHSEDAGVICDYFGKKASGNSNKESLSSVCGLRLLHRRQKRIIGGKNSLRGGWPWQVSLRLKSSHGDGRLLCGATLLSSCWVLTAAHCFKRYGNSTRNYAVRVGDYHTLVPEEFEEEIGVQQIVIHREYRPDSSDYDIALVRLQGPEEQCARFSSHVLPACLPFWRERPQKTASNCYITGWGDTGRAYSRTLQQAAIPLLPKRFCEERYKGRFTGRMLCAGNLHEHKRVDSCQGDSGGPLMCERPGESWAVYGVTSWGYGCGVKDSPGVYTKVSAFVPWIKSVTKL</sequence>
<dbReference type="EC" id="3.4.21.-"/>
<dbReference type="EMBL" id="AY862980">
    <property type="protein sequence ID" value="AAW57542.1"/>
    <property type="molecule type" value="Genomic_DNA"/>
</dbReference>
<dbReference type="EMBL" id="AY862896">
    <property type="protein sequence ID" value="AAW57542.1"/>
    <property type="status" value="JOINED"/>
    <property type="molecule type" value="Genomic_DNA"/>
</dbReference>
<dbReference type="EMBL" id="AY862903">
    <property type="protein sequence ID" value="AAW57542.1"/>
    <property type="status" value="JOINED"/>
    <property type="molecule type" value="Genomic_DNA"/>
</dbReference>
<dbReference type="EMBL" id="AY862910">
    <property type="protein sequence ID" value="AAW57542.1"/>
    <property type="status" value="JOINED"/>
    <property type="molecule type" value="Genomic_DNA"/>
</dbReference>
<dbReference type="EMBL" id="AY862917">
    <property type="protein sequence ID" value="AAW57542.1"/>
    <property type="status" value="JOINED"/>
    <property type="molecule type" value="Genomic_DNA"/>
</dbReference>
<dbReference type="EMBL" id="AY862924">
    <property type="protein sequence ID" value="AAW57542.1"/>
    <property type="status" value="JOINED"/>
    <property type="molecule type" value="Genomic_DNA"/>
</dbReference>
<dbReference type="EMBL" id="AY862931">
    <property type="protein sequence ID" value="AAW57542.1"/>
    <property type="status" value="JOINED"/>
    <property type="molecule type" value="Genomic_DNA"/>
</dbReference>
<dbReference type="EMBL" id="AY862938">
    <property type="protein sequence ID" value="AAW57542.1"/>
    <property type="status" value="JOINED"/>
    <property type="molecule type" value="Genomic_DNA"/>
</dbReference>
<dbReference type="EMBL" id="AY862945">
    <property type="protein sequence ID" value="AAW57542.1"/>
    <property type="status" value="JOINED"/>
    <property type="molecule type" value="Genomic_DNA"/>
</dbReference>
<dbReference type="EMBL" id="AY862952">
    <property type="protein sequence ID" value="AAW57542.1"/>
    <property type="status" value="JOINED"/>
    <property type="molecule type" value="Genomic_DNA"/>
</dbReference>
<dbReference type="EMBL" id="AY862959">
    <property type="protein sequence ID" value="AAW57542.1"/>
    <property type="status" value="JOINED"/>
    <property type="molecule type" value="Genomic_DNA"/>
</dbReference>
<dbReference type="EMBL" id="AY862966">
    <property type="protein sequence ID" value="AAW57542.1"/>
    <property type="status" value="JOINED"/>
    <property type="molecule type" value="Genomic_DNA"/>
</dbReference>
<dbReference type="EMBL" id="AY862973">
    <property type="protein sequence ID" value="AAW57542.1"/>
    <property type="status" value="JOINED"/>
    <property type="molecule type" value="Genomic_DNA"/>
</dbReference>
<dbReference type="SMR" id="Q5G267"/>
<dbReference type="FunCoup" id="Q5G267">
    <property type="interactions" value="49"/>
</dbReference>
<dbReference type="STRING" id="9544.ENSMMUP00000020010"/>
<dbReference type="MEROPS" id="S01.237"/>
<dbReference type="GlyCosmos" id="Q5G267">
    <property type="glycosylation" value="2 sites, No reported glycans"/>
</dbReference>
<dbReference type="PaxDb" id="9544-ENSMMUP00000020010"/>
<dbReference type="eggNOG" id="KOG3627">
    <property type="taxonomic scope" value="Eukaryota"/>
</dbReference>
<dbReference type="InParanoid" id="Q5G267"/>
<dbReference type="Proteomes" id="UP000006718">
    <property type="component" value="Unassembled WGS sequence"/>
</dbReference>
<dbReference type="GO" id="GO:0030424">
    <property type="term" value="C:axon"/>
    <property type="evidence" value="ECO:0000250"/>
    <property type="project" value="UniProtKB"/>
</dbReference>
<dbReference type="GO" id="GO:0030425">
    <property type="term" value="C:dendrite"/>
    <property type="evidence" value="ECO:0000318"/>
    <property type="project" value="GO_Central"/>
</dbReference>
<dbReference type="GO" id="GO:0005886">
    <property type="term" value="C:plasma membrane"/>
    <property type="evidence" value="ECO:0000250"/>
    <property type="project" value="UniProtKB"/>
</dbReference>
<dbReference type="GO" id="GO:0043083">
    <property type="term" value="C:synaptic cleft"/>
    <property type="evidence" value="ECO:0000318"/>
    <property type="project" value="GO_Central"/>
</dbReference>
<dbReference type="GO" id="GO:0043195">
    <property type="term" value="C:terminal bouton"/>
    <property type="evidence" value="ECO:0000318"/>
    <property type="project" value="GO_Central"/>
</dbReference>
<dbReference type="GO" id="GO:0004252">
    <property type="term" value="F:serine-type endopeptidase activity"/>
    <property type="evidence" value="ECO:0007669"/>
    <property type="project" value="InterPro"/>
</dbReference>
<dbReference type="GO" id="GO:0006887">
    <property type="term" value="P:exocytosis"/>
    <property type="evidence" value="ECO:0000250"/>
    <property type="project" value="UniProtKB"/>
</dbReference>
<dbReference type="GO" id="GO:0006508">
    <property type="term" value="P:proteolysis"/>
    <property type="evidence" value="ECO:0007669"/>
    <property type="project" value="UniProtKB-KW"/>
</dbReference>
<dbReference type="CDD" id="cd00190">
    <property type="entry name" value="Tryp_SPc"/>
    <property type="match status" value="1"/>
</dbReference>
<dbReference type="FunFam" id="2.40.10.10:FF:000053">
    <property type="entry name" value="Neurotrypsin"/>
    <property type="match status" value="1"/>
</dbReference>
<dbReference type="FunFam" id="2.40.20.10:FF:000010">
    <property type="entry name" value="Neurotrypsin"/>
    <property type="match status" value="1"/>
</dbReference>
<dbReference type="FunFam" id="3.10.250.10:FF:000019">
    <property type="entry name" value="Neurotrypsin"/>
    <property type="match status" value="1"/>
</dbReference>
<dbReference type="FunFam" id="3.10.250.10:FF:000005">
    <property type="entry name" value="Neurotrypsin isoform A"/>
    <property type="match status" value="2"/>
</dbReference>
<dbReference type="FunFam" id="3.10.250.10:FF:000006">
    <property type="entry name" value="neurotrypsin isoform X2"/>
    <property type="match status" value="1"/>
</dbReference>
<dbReference type="Gene3D" id="2.40.20.10">
    <property type="entry name" value="Plasminogen Kringle 4"/>
    <property type="match status" value="1"/>
</dbReference>
<dbReference type="Gene3D" id="3.10.250.10">
    <property type="entry name" value="SRCR-like domain"/>
    <property type="match status" value="4"/>
</dbReference>
<dbReference type="Gene3D" id="2.40.10.10">
    <property type="entry name" value="Trypsin-like serine proteases"/>
    <property type="match status" value="1"/>
</dbReference>
<dbReference type="InterPro" id="IPR000001">
    <property type="entry name" value="Kringle"/>
</dbReference>
<dbReference type="InterPro" id="IPR013806">
    <property type="entry name" value="Kringle-like"/>
</dbReference>
<dbReference type="InterPro" id="IPR018056">
    <property type="entry name" value="Kringle_CS"/>
</dbReference>
<dbReference type="InterPro" id="IPR038178">
    <property type="entry name" value="Kringle_sf"/>
</dbReference>
<dbReference type="InterPro" id="IPR009003">
    <property type="entry name" value="Peptidase_S1_PA"/>
</dbReference>
<dbReference type="InterPro" id="IPR043504">
    <property type="entry name" value="Peptidase_S1_PA_chymotrypsin"/>
</dbReference>
<dbReference type="InterPro" id="IPR001314">
    <property type="entry name" value="Peptidase_S1A"/>
</dbReference>
<dbReference type="InterPro" id="IPR001190">
    <property type="entry name" value="SRCR"/>
</dbReference>
<dbReference type="InterPro" id="IPR036772">
    <property type="entry name" value="SRCR-like_dom_sf"/>
</dbReference>
<dbReference type="InterPro" id="IPR001254">
    <property type="entry name" value="Trypsin_dom"/>
</dbReference>
<dbReference type="InterPro" id="IPR018114">
    <property type="entry name" value="TRYPSIN_HIS"/>
</dbReference>
<dbReference type="InterPro" id="IPR033116">
    <property type="entry name" value="TRYPSIN_SER"/>
</dbReference>
<dbReference type="PANTHER" id="PTHR19331:SF465">
    <property type="entry name" value="EGG PEPTIDE SPERACT RECEPTOR"/>
    <property type="match status" value="1"/>
</dbReference>
<dbReference type="PANTHER" id="PTHR19331">
    <property type="entry name" value="SCAVENGER RECEPTOR DOMAIN-CONTAINING"/>
    <property type="match status" value="1"/>
</dbReference>
<dbReference type="Pfam" id="PF00051">
    <property type="entry name" value="Kringle"/>
    <property type="match status" value="1"/>
</dbReference>
<dbReference type="Pfam" id="PF00530">
    <property type="entry name" value="SRCR"/>
    <property type="match status" value="4"/>
</dbReference>
<dbReference type="Pfam" id="PF00089">
    <property type="entry name" value="Trypsin"/>
    <property type="match status" value="1"/>
</dbReference>
<dbReference type="PRINTS" id="PR00722">
    <property type="entry name" value="CHYMOTRYPSIN"/>
</dbReference>
<dbReference type="PRINTS" id="PR00258">
    <property type="entry name" value="SPERACTRCPTR"/>
</dbReference>
<dbReference type="SMART" id="SM00130">
    <property type="entry name" value="KR"/>
    <property type="match status" value="1"/>
</dbReference>
<dbReference type="SMART" id="SM00202">
    <property type="entry name" value="SR"/>
    <property type="match status" value="4"/>
</dbReference>
<dbReference type="SMART" id="SM00020">
    <property type="entry name" value="Tryp_SPc"/>
    <property type="match status" value="1"/>
</dbReference>
<dbReference type="SUPFAM" id="SSF57440">
    <property type="entry name" value="Kringle-like"/>
    <property type="match status" value="1"/>
</dbReference>
<dbReference type="SUPFAM" id="SSF56487">
    <property type="entry name" value="SRCR-like"/>
    <property type="match status" value="4"/>
</dbReference>
<dbReference type="SUPFAM" id="SSF50494">
    <property type="entry name" value="Trypsin-like serine proteases"/>
    <property type="match status" value="1"/>
</dbReference>
<dbReference type="PROSITE" id="PS00021">
    <property type="entry name" value="KRINGLE_1"/>
    <property type="match status" value="1"/>
</dbReference>
<dbReference type="PROSITE" id="PS50070">
    <property type="entry name" value="KRINGLE_2"/>
    <property type="match status" value="1"/>
</dbReference>
<dbReference type="PROSITE" id="PS00420">
    <property type="entry name" value="SRCR_1"/>
    <property type="match status" value="3"/>
</dbReference>
<dbReference type="PROSITE" id="PS50287">
    <property type="entry name" value="SRCR_2"/>
    <property type="match status" value="4"/>
</dbReference>
<dbReference type="PROSITE" id="PS50240">
    <property type="entry name" value="TRYPSIN_DOM"/>
    <property type="match status" value="1"/>
</dbReference>
<dbReference type="PROSITE" id="PS00134">
    <property type="entry name" value="TRYPSIN_HIS"/>
    <property type="match status" value="1"/>
</dbReference>
<dbReference type="PROSITE" id="PS00135">
    <property type="entry name" value="TRYPSIN_SER"/>
    <property type="match status" value="1"/>
</dbReference>
<feature type="signal peptide" evidence="2">
    <location>
        <begin position="1"/>
        <end position="20"/>
    </location>
</feature>
<feature type="chain" id="PRO_0000027665" description="Neurotrypsin">
    <location>
        <begin position="21"/>
        <end position="875"/>
    </location>
</feature>
<feature type="domain" description="Kringle" evidence="3">
    <location>
        <begin position="93"/>
        <end position="165"/>
    </location>
</feature>
<feature type="domain" description="SRCR 1" evidence="4">
    <location>
        <begin position="170"/>
        <end position="271"/>
    </location>
</feature>
<feature type="domain" description="SRCR 2" evidence="4">
    <location>
        <begin position="280"/>
        <end position="381"/>
    </location>
</feature>
<feature type="domain" description="SRCR 3" evidence="4">
    <location>
        <begin position="387"/>
        <end position="487"/>
    </location>
</feature>
<feature type="domain" description="SRCR 4" evidence="4">
    <location>
        <begin position="500"/>
        <end position="601"/>
    </location>
</feature>
<feature type="domain" description="Peptidase S1" evidence="5">
    <location>
        <begin position="631"/>
        <end position="874"/>
    </location>
</feature>
<feature type="region of interest" description="Disordered" evidence="6">
    <location>
        <begin position="30"/>
        <end position="87"/>
    </location>
</feature>
<feature type="region of interest" description="Zymogen activation region">
    <location>
        <begin position="619"/>
        <end position="630"/>
    </location>
</feature>
<feature type="compositionally biased region" description="Pro residues" evidence="6">
    <location>
        <begin position="56"/>
        <end position="71"/>
    </location>
</feature>
<feature type="active site" description="Charge relay system" evidence="1">
    <location>
        <position position="676"/>
    </location>
</feature>
<feature type="active site" description="Charge relay system" evidence="1">
    <location>
        <position position="726"/>
    </location>
</feature>
<feature type="active site" description="Charge relay system" evidence="1">
    <location>
        <position position="825"/>
    </location>
</feature>
<feature type="site" description="Reactive bond homolog" evidence="2">
    <location>
        <begin position="630"/>
        <end position="631"/>
    </location>
</feature>
<feature type="glycosylation site" description="N-linked (GlcNAc...) asparagine" evidence="2">
    <location>
        <position position="26"/>
    </location>
</feature>
<feature type="glycosylation site" description="N-linked (GlcNAc...) asparagine" evidence="2">
    <location>
        <position position="683"/>
    </location>
</feature>
<feature type="disulfide bond" evidence="1">
    <location>
        <begin position="93"/>
        <end position="165"/>
    </location>
</feature>
<feature type="disulfide bond" evidence="1">
    <location>
        <begin position="109"/>
        <end position="149"/>
    </location>
</feature>
<feature type="disulfide bond" evidence="1">
    <location>
        <begin position="138"/>
        <end position="163"/>
    </location>
</feature>
<feature type="disulfide bond" evidence="1">
    <location>
        <begin position="195"/>
        <end position="259"/>
    </location>
</feature>
<feature type="disulfide bond" evidence="1">
    <location>
        <begin position="208"/>
        <end position="269"/>
    </location>
</feature>
<feature type="disulfide bond" evidence="1">
    <location>
        <begin position="239"/>
        <end position="249"/>
    </location>
</feature>
<feature type="disulfide bond" evidence="1">
    <location>
        <begin position="305"/>
        <end position="369"/>
    </location>
</feature>
<feature type="disulfide bond" evidence="1">
    <location>
        <begin position="318"/>
        <end position="379"/>
    </location>
</feature>
<feature type="disulfide bond" evidence="1">
    <location>
        <begin position="349"/>
        <end position="359"/>
    </location>
</feature>
<feature type="disulfide bond" evidence="1">
    <location>
        <begin position="412"/>
        <end position="475"/>
    </location>
</feature>
<feature type="disulfide bond" evidence="1">
    <location>
        <begin position="425"/>
        <end position="485"/>
    </location>
</feature>
<feature type="disulfide bond" evidence="1">
    <location>
        <begin position="455"/>
        <end position="465"/>
    </location>
</feature>
<feature type="disulfide bond" evidence="1">
    <location>
        <begin position="525"/>
        <end position="589"/>
    </location>
</feature>
<feature type="disulfide bond" evidence="1">
    <location>
        <begin position="538"/>
        <end position="599"/>
    </location>
</feature>
<feature type="disulfide bond" evidence="1">
    <location>
        <begin position="569"/>
        <end position="579"/>
    </location>
</feature>
<feature type="disulfide bond" evidence="2">
    <location>
        <begin position="619"/>
        <end position="750"/>
    </location>
</feature>
<feature type="disulfide bond" evidence="1">
    <location>
        <begin position="661"/>
        <end position="677"/>
    </location>
</feature>
<feature type="disulfide bond" evidence="1">
    <location>
        <begin position="765"/>
        <end position="831"/>
    </location>
</feature>
<feature type="disulfide bond" evidence="1">
    <location>
        <begin position="794"/>
        <end position="808"/>
    </location>
</feature>
<feature type="disulfide bond" evidence="1">
    <location>
        <begin position="821"/>
        <end position="850"/>
    </location>
</feature>
<gene>
    <name type="primary">PRSS12</name>
</gene>
<protein>
    <recommendedName>
        <fullName>Neurotrypsin</fullName>
        <ecNumber>3.4.21.-</ecNumber>
    </recommendedName>
    <alternativeName>
        <fullName>Serine protease 12</fullName>
    </alternativeName>
</protein>
<comment type="function">
    <text evidence="1">Plays a role in neuronal plasticity and the proteolytic action may subserve structural reorganizations associated with learning and memory operations.</text>
</comment>
<comment type="subcellular location">
    <subcellularLocation>
        <location>Secreted</location>
    </subcellularLocation>
</comment>
<comment type="similarity">
    <text evidence="5">Belongs to the peptidase S1 family.</text>
</comment>
<evidence type="ECO:0000250" key="1"/>
<evidence type="ECO:0000255" key="2"/>
<evidence type="ECO:0000255" key="3">
    <source>
        <dbReference type="PROSITE-ProRule" id="PRU00121"/>
    </source>
</evidence>
<evidence type="ECO:0000255" key="4">
    <source>
        <dbReference type="PROSITE-ProRule" id="PRU00196"/>
    </source>
</evidence>
<evidence type="ECO:0000255" key="5">
    <source>
        <dbReference type="PROSITE-ProRule" id="PRU00274"/>
    </source>
</evidence>
<evidence type="ECO:0000256" key="6">
    <source>
        <dbReference type="SAM" id="MobiDB-lite"/>
    </source>
</evidence>
<reference key="1">
    <citation type="journal article" date="2005" name="Cytogenet. Genome Res.">
        <title>Genetic evidence of a strong functional constraint of neurotrypsin during primate evolution.</title>
        <authorList>
            <person name="Xu H.L."/>
            <person name="Su B."/>
        </authorList>
    </citation>
    <scope>NUCLEOTIDE SEQUENCE [GENOMIC DNA]</scope>
</reference>